<name>RBSA_JANSC</name>
<gene>
    <name evidence="1" type="primary">rbsA</name>
    <name type="ordered locus">Jann_2595</name>
</gene>
<protein>
    <recommendedName>
        <fullName evidence="1">Ribose import ATP-binding protein RbsA</fullName>
        <ecNumber evidence="1">7.5.2.7</ecNumber>
    </recommendedName>
</protein>
<reference key="1">
    <citation type="submission" date="2006-02" db="EMBL/GenBank/DDBJ databases">
        <title>Complete sequence of chromosome of Jannaschia sp. CCS1.</title>
        <authorList>
            <consortium name="US DOE Joint Genome Institute"/>
            <person name="Copeland A."/>
            <person name="Lucas S."/>
            <person name="Lapidus A."/>
            <person name="Barry K."/>
            <person name="Detter J.C."/>
            <person name="Glavina del Rio T."/>
            <person name="Hammon N."/>
            <person name="Israni S."/>
            <person name="Pitluck S."/>
            <person name="Brettin T."/>
            <person name="Bruce D."/>
            <person name="Han C."/>
            <person name="Tapia R."/>
            <person name="Gilna P."/>
            <person name="Chertkov O."/>
            <person name="Saunders E."/>
            <person name="Schmutz J."/>
            <person name="Larimer F."/>
            <person name="Land M."/>
            <person name="Kyrpides N."/>
            <person name="Lykidis A."/>
            <person name="Moran M.A."/>
            <person name="Belas R."/>
            <person name="Ye W."/>
            <person name="Buchan A."/>
            <person name="Gonzalez J.M."/>
            <person name="Schell M.A."/>
            <person name="Richardson P."/>
        </authorList>
    </citation>
    <scope>NUCLEOTIDE SEQUENCE [LARGE SCALE GENOMIC DNA]</scope>
    <source>
        <strain>CCS1</strain>
    </source>
</reference>
<proteinExistence type="inferred from homology"/>
<dbReference type="EC" id="7.5.2.7" evidence="1"/>
<dbReference type="EMBL" id="CP000264">
    <property type="protein sequence ID" value="ABD55512.1"/>
    <property type="status" value="ALT_INIT"/>
    <property type="molecule type" value="Genomic_DNA"/>
</dbReference>
<dbReference type="RefSeq" id="WP_044006781.1">
    <property type="nucleotide sequence ID" value="NC_007802.1"/>
</dbReference>
<dbReference type="SMR" id="Q28P50"/>
<dbReference type="STRING" id="290400.Jann_2595"/>
<dbReference type="KEGG" id="jan:Jann_2595"/>
<dbReference type="eggNOG" id="COG1129">
    <property type="taxonomic scope" value="Bacteria"/>
</dbReference>
<dbReference type="HOGENOM" id="CLU_000604_92_3_5"/>
<dbReference type="Proteomes" id="UP000008326">
    <property type="component" value="Chromosome"/>
</dbReference>
<dbReference type="GO" id="GO:0005886">
    <property type="term" value="C:plasma membrane"/>
    <property type="evidence" value="ECO:0007669"/>
    <property type="project" value="UniProtKB-SubCell"/>
</dbReference>
<dbReference type="GO" id="GO:0015611">
    <property type="term" value="F:ABC-type D-ribose transporter activity"/>
    <property type="evidence" value="ECO:0007669"/>
    <property type="project" value="UniProtKB-EC"/>
</dbReference>
<dbReference type="GO" id="GO:0005524">
    <property type="term" value="F:ATP binding"/>
    <property type="evidence" value="ECO:0007669"/>
    <property type="project" value="UniProtKB-KW"/>
</dbReference>
<dbReference type="GO" id="GO:0016887">
    <property type="term" value="F:ATP hydrolysis activity"/>
    <property type="evidence" value="ECO:0007669"/>
    <property type="project" value="InterPro"/>
</dbReference>
<dbReference type="CDD" id="cd03216">
    <property type="entry name" value="ABC_Carb_Monos_I"/>
    <property type="match status" value="1"/>
</dbReference>
<dbReference type="CDD" id="cd03215">
    <property type="entry name" value="ABC_Carb_Monos_II"/>
    <property type="match status" value="1"/>
</dbReference>
<dbReference type="FunFam" id="3.40.50.300:FF:000127">
    <property type="entry name" value="Ribose import ATP-binding protein RbsA"/>
    <property type="match status" value="1"/>
</dbReference>
<dbReference type="Gene3D" id="3.40.50.300">
    <property type="entry name" value="P-loop containing nucleotide triphosphate hydrolases"/>
    <property type="match status" value="2"/>
</dbReference>
<dbReference type="InterPro" id="IPR003593">
    <property type="entry name" value="AAA+_ATPase"/>
</dbReference>
<dbReference type="InterPro" id="IPR050107">
    <property type="entry name" value="ABC_carbohydrate_import_ATPase"/>
</dbReference>
<dbReference type="InterPro" id="IPR003439">
    <property type="entry name" value="ABC_transporter-like_ATP-bd"/>
</dbReference>
<dbReference type="InterPro" id="IPR017871">
    <property type="entry name" value="ABC_transporter-like_CS"/>
</dbReference>
<dbReference type="InterPro" id="IPR027417">
    <property type="entry name" value="P-loop_NTPase"/>
</dbReference>
<dbReference type="PANTHER" id="PTHR43790">
    <property type="entry name" value="CARBOHYDRATE TRANSPORT ATP-BINDING PROTEIN MG119-RELATED"/>
    <property type="match status" value="1"/>
</dbReference>
<dbReference type="PANTHER" id="PTHR43790:SF3">
    <property type="entry name" value="D-ALLOSE IMPORT ATP-BINDING PROTEIN ALSA-RELATED"/>
    <property type="match status" value="1"/>
</dbReference>
<dbReference type="Pfam" id="PF00005">
    <property type="entry name" value="ABC_tran"/>
    <property type="match status" value="2"/>
</dbReference>
<dbReference type="SMART" id="SM00382">
    <property type="entry name" value="AAA"/>
    <property type="match status" value="2"/>
</dbReference>
<dbReference type="SUPFAM" id="SSF52540">
    <property type="entry name" value="P-loop containing nucleoside triphosphate hydrolases"/>
    <property type="match status" value="2"/>
</dbReference>
<dbReference type="PROSITE" id="PS00211">
    <property type="entry name" value="ABC_TRANSPORTER_1"/>
    <property type="match status" value="1"/>
</dbReference>
<dbReference type="PROSITE" id="PS50893">
    <property type="entry name" value="ABC_TRANSPORTER_2"/>
    <property type="match status" value="2"/>
</dbReference>
<dbReference type="PROSITE" id="PS51254">
    <property type="entry name" value="RBSA"/>
    <property type="match status" value="1"/>
</dbReference>
<keyword id="KW-0067">ATP-binding</keyword>
<keyword id="KW-0997">Cell inner membrane</keyword>
<keyword id="KW-1003">Cell membrane</keyword>
<keyword id="KW-0472">Membrane</keyword>
<keyword id="KW-0547">Nucleotide-binding</keyword>
<keyword id="KW-1185">Reference proteome</keyword>
<keyword id="KW-0677">Repeat</keyword>
<keyword id="KW-0762">Sugar transport</keyword>
<keyword id="KW-1278">Translocase</keyword>
<keyword id="KW-0813">Transport</keyword>
<evidence type="ECO:0000255" key="1">
    <source>
        <dbReference type="HAMAP-Rule" id="MF_01716"/>
    </source>
</evidence>
<evidence type="ECO:0000305" key="2"/>
<comment type="function">
    <text evidence="1">Part of the ABC transporter complex RbsABC involved in ribose import. Responsible for energy coupling to the transport system.</text>
</comment>
<comment type="catalytic activity">
    <reaction evidence="1">
        <text>D-ribose(out) + ATP + H2O = D-ribose(in) + ADP + phosphate + H(+)</text>
        <dbReference type="Rhea" id="RHEA:29903"/>
        <dbReference type="ChEBI" id="CHEBI:15377"/>
        <dbReference type="ChEBI" id="CHEBI:15378"/>
        <dbReference type="ChEBI" id="CHEBI:30616"/>
        <dbReference type="ChEBI" id="CHEBI:43474"/>
        <dbReference type="ChEBI" id="CHEBI:47013"/>
        <dbReference type="ChEBI" id="CHEBI:456216"/>
        <dbReference type="EC" id="7.5.2.7"/>
    </reaction>
</comment>
<comment type="subunit">
    <text evidence="1">The complex is composed of an ATP-binding protein (RbsA), two transmembrane proteins (RbsC) and a solute-binding protein (RbsB).</text>
</comment>
<comment type="subcellular location">
    <subcellularLocation>
        <location evidence="1">Cell inner membrane</location>
        <topology evidence="1">Peripheral membrane protein</topology>
    </subcellularLocation>
</comment>
<comment type="similarity">
    <text evidence="1">Belongs to the ABC transporter superfamily. Ribose importer (TC 3.A.1.2.1) family.</text>
</comment>
<comment type="sequence caution" evidence="2">
    <conflict type="erroneous initiation">
        <sequence resource="EMBL-CDS" id="ABD55512"/>
    </conflict>
</comment>
<feature type="chain" id="PRO_0000261071" description="Ribose import ATP-binding protein RbsA">
    <location>
        <begin position="1"/>
        <end position="516"/>
    </location>
</feature>
<feature type="domain" description="ABC transporter 1" evidence="1">
    <location>
        <begin position="14"/>
        <end position="250"/>
    </location>
</feature>
<feature type="domain" description="ABC transporter 2" evidence="1">
    <location>
        <begin position="261"/>
        <end position="504"/>
    </location>
</feature>
<feature type="binding site" evidence="1">
    <location>
        <begin position="46"/>
        <end position="53"/>
    </location>
    <ligand>
        <name>ATP</name>
        <dbReference type="ChEBI" id="CHEBI:30616"/>
    </ligand>
</feature>
<accession>Q28P50</accession>
<organism>
    <name type="scientific">Jannaschia sp. (strain CCS1)</name>
    <dbReference type="NCBI Taxonomy" id="290400"/>
    <lineage>
        <taxon>Bacteria</taxon>
        <taxon>Pseudomonadati</taxon>
        <taxon>Pseudomonadota</taxon>
        <taxon>Alphaproteobacteria</taxon>
        <taxon>Rhodobacterales</taxon>
        <taxon>Roseobacteraceae</taxon>
        <taxon>Jannaschia</taxon>
    </lineage>
</organism>
<sequence>MLKLAPTPSDDPVLRLTGITKTFPGVKALNAVSLELYPGEVTALIGENGAGKSTIVKVLTGIYRADGGEITVDGEPVNFTSAEDATAAGITAIHQETVLFDELSVAENIFIGHAPRGRFGLIDTSTMIARAQEILDRIDAPLRATTPLKDLGIANKHLVAIARALSVDARVVIMDEPTAALSQKEIEELYELVDRLKAEGRAILFISHKFDEVFRIADRYAVFRDGEHVGAGLMADVNEGDLVQLMVGRAVDQIFPERDHAKGAEVLRVEGYAHPTEFDDISLTLHAGEILGFYGLVGAGRSELMQAIFGITKPSAGTIQIAGEARTIGSPAQAIENGIVYVPEDRGQQGAVLGLPIFQNVTLPSLSQTSRGGFLKLAAEFALARDYTERLELRAAALDQDVGNLSGGNQQKVVIAKWLATKPRVIILDEPTKGIDIGSKAAVHAFMAELAAEGLAVIMVSSEIPEILGMSDRVIVMREGLIAAELDRADLSPEVLVRHAAGIGPKVHENEMEERP</sequence>